<organism>
    <name type="scientific">Mus musculus</name>
    <name type="common">Mouse</name>
    <dbReference type="NCBI Taxonomy" id="10090"/>
    <lineage>
        <taxon>Eukaryota</taxon>
        <taxon>Metazoa</taxon>
        <taxon>Chordata</taxon>
        <taxon>Craniata</taxon>
        <taxon>Vertebrata</taxon>
        <taxon>Euteleostomi</taxon>
        <taxon>Mammalia</taxon>
        <taxon>Eutheria</taxon>
        <taxon>Euarchontoglires</taxon>
        <taxon>Glires</taxon>
        <taxon>Rodentia</taxon>
        <taxon>Myomorpha</taxon>
        <taxon>Muroidea</taxon>
        <taxon>Muridae</taxon>
        <taxon>Murinae</taxon>
        <taxon>Mus</taxon>
        <taxon>Mus</taxon>
    </lineage>
</organism>
<dbReference type="EMBL" id="AK044820">
    <property type="protein sequence ID" value="BAC32105.2"/>
    <property type="molecule type" value="mRNA"/>
</dbReference>
<dbReference type="EMBL" id="AK045873">
    <property type="protein sequence ID" value="BAC32517.1"/>
    <property type="molecule type" value="mRNA"/>
</dbReference>
<dbReference type="EMBL" id="AK052544">
    <property type="protein sequence ID" value="BAC35032.1"/>
    <property type="molecule type" value="mRNA"/>
</dbReference>
<dbReference type="EMBL" id="AK054511">
    <property type="protein sequence ID" value="BAC35807.1"/>
    <property type="molecule type" value="mRNA"/>
</dbReference>
<dbReference type="EMBL" id="AC157998">
    <property type="status" value="NOT_ANNOTATED_CDS"/>
    <property type="molecule type" value="Genomic_DNA"/>
</dbReference>
<dbReference type="EMBL" id="BC043710">
    <property type="protein sequence ID" value="AAH43710.1"/>
    <property type="molecule type" value="mRNA"/>
</dbReference>
<dbReference type="FunCoup" id="Q8BL99">
    <property type="interactions" value="2506"/>
</dbReference>
<dbReference type="STRING" id="10090.ENSMUSP00000140740"/>
<dbReference type="GlyGen" id="Q8BL99">
    <property type="glycosylation" value="1 site, 1 N-linked glycan (1 site)"/>
</dbReference>
<dbReference type="iPTMnet" id="Q8BL99"/>
<dbReference type="PhosphoSitePlus" id="Q8BL99"/>
<dbReference type="jPOST" id="Q8BL99"/>
<dbReference type="PaxDb" id="10090-ENSMUSP00000140740"/>
<dbReference type="PeptideAtlas" id="Q8BL99"/>
<dbReference type="ProteomicsDB" id="277590">
    <molecule id="Q8BL99-1"/>
</dbReference>
<dbReference type="ProteomicsDB" id="277591">
    <molecule id="Q8BL99-2"/>
</dbReference>
<dbReference type="ProteomicsDB" id="277592">
    <molecule id="Q8BL99-3"/>
</dbReference>
<dbReference type="ProteomicsDB" id="277593">
    <molecule id="Q8BL99-4"/>
</dbReference>
<dbReference type="ProteomicsDB" id="277594">
    <molecule id="Q8BL99-5"/>
</dbReference>
<dbReference type="ProteomicsDB" id="277595">
    <molecule id="Q8BL99-6"/>
</dbReference>
<dbReference type="Pumba" id="Q8BL99"/>
<dbReference type="UCSC" id="uc009qxd.2">
    <molecule id="Q8BL99-4"/>
    <property type="organism name" value="mouse"/>
</dbReference>
<dbReference type="UCSC" id="uc009qxe.2">
    <molecule id="Q8BL99-2"/>
    <property type="organism name" value="mouse"/>
</dbReference>
<dbReference type="UCSC" id="uc009qxl.2">
    <molecule id="Q8BL99-3"/>
    <property type="organism name" value="mouse"/>
</dbReference>
<dbReference type="AGR" id="MGI:1289294"/>
<dbReference type="MGI" id="MGI:1289294">
    <property type="gene designation" value="Dop1a"/>
</dbReference>
<dbReference type="eggNOG" id="KOG3613">
    <property type="taxonomic scope" value="Eukaryota"/>
</dbReference>
<dbReference type="InParanoid" id="Q8BL99"/>
<dbReference type="PhylomeDB" id="Q8BL99"/>
<dbReference type="ChiTaRS" id="Dop1a">
    <property type="organism name" value="mouse"/>
</dbReference>
<dbReference type="PRO" id="PR:Q8BL99"/>
<dbReference type="Proteomes" id="UP000000589">
    <property type="component" value="Unplaced"/>
</dbReference>
<dbReference type="RNAct" id="Q8BL99">
    <property type="molecule type" value="protein"/>
</dbReference>
<dbReference type="GO" id="GO:0005829">
    <property type="term" value="C:cytosol"/>
    <property type="evidence" value="ECO:0007669"/>
    <property type="project" value="GOC"/>
</dbReference>
<dbReference type="GO" id="GO:0000139">
    <property type="term" value="C:Golgi membrane"/>
    <property type="evidence" value="ECO:0007669"/>
    <property type="project" value="UniProtKB-SubCell"/>
</dbReference>
<dbReference type="GO" id="GO:0006895">
    <property type="term" value="P:Golgi to endosome transport"/>
    <property type="evidence" value="ECO:0007669"/>
    <property type="project" value="InterPro"/>
</dbReference>
<dbReference type="GO" id="GO:0015031">
    <property type="term" value="P:protein transport"/>
    <property type="evidence" value="ECO:0007669"/>
    <property type="project" value="UniProtKB-KW"/>
</dbReference>
<dbReference type="InterPro" id="IPR040314">
    <property type="entry name" value="DOP1"/>
</dbReference>
<dbReference type="InterPro" id="IPR056457">
    <property type="entry name" value="DOP1_C"/>
</dbReference>
<dbReference type="InterPro" id="IPR007249">
    <property type="entry name" value="DOP1_N"/>
</dbReference>
<dbReference type="InterPro" id="IPR056459">
    <property type="entry name" value="TPR_DOP1"/>
</dbReference>
<dbReference type="InterPro" id="IPR056458">
    <property type="entry name" value="TPR_DOP1_M"/>
</dbReference>
<dbReference type="PANTHER" id="PTHR14042">
    <property type="entry name" value="DOPEY-RELATED"/>
    <property type="match status" value="1"/>
</dbReference>
<dbReference type="PANTHER" id="PTHR14042:SF22">
    <property type="entry name" value="PROTEIN DOPEY-1"/>
    <property type="match status" value="1"/>
</dbReference>
<dbReference type="Pfam" id="PF24598">
    <property type="entry name" value="DOP1_C"/>
    <property type="match status" value="1"/>
</dbReference>
<dbReference type="Pfam" id="PF04118">
    <property type="entry name" value="Dopey_N"/>
    <property type="match status" value="1"/>
</dbReference>
<dbReference type="Pfam" id="PF24601">
    <property type="entry name" value="TPR_DOP1"/>
    <property type="match status" value="1"/>
</dbReference>
<dbReference type="Pfam" id="PF24597">
    <property type="entry name" value="TPR_DOP1_M"/>
    <property type="match status" value="1"/>
</dbReference>
<protein>
    <recommendedName>
        <fullName evidence="5">Protein DOP1A</fullName>
    </recommendedName>
</protein>
<name>DOP1A_MOUSE</name>
<sequence>MNTEELELLSDSKYRNYVAAIDKALKNFEYSSEWADLISALGKLNKVLQNNAKYQVVPKKLTIGKRLAQCLHPALPGGVHRKALETYEIIFKIIGPKRLAKDLFLYSSGLFPLLANAAMSVKPALLGLYEMYYLPLGKTLKPGLQGLLTGILPGLEEGSEYYERTNTLLEKVAAAVEQSAFYSALWGSLLTSPAVRLPGITYVLAHLNRKLSMEDQLYIIGSDIELMVEAVSTSVQDSSVLVQRSTLDLILFCFPFHMSQATRPDMIRILSAALHVVLRRDMSLNRRLYAWLLGFDNNGAIIGPRSTRHSNPEEHATYYFTTFSKELLVQAMVGILQVNGFGEESTLMQDLKPFRILISLLDKPELGPVILEDVLIEVFRTLYSQCKAELDLQMEPPFSKDHAQLSSKLRENKKTAELIKTANLLFNSFEPYYMWDYIARWFEECCRQSFFLSRRTLHARLQVGPGDSSDSSELQLTNFCLLVDFLLDIVSLETYIEIQTEHLPQLLLRMISALTSHLQTLRLSELTDSLRLCSKILSKVQPPLLSAGNGGVVQFPSGQNSTVKEWEDKKQVSSVSMENPAEVFEDGENPPSSRSSESGFTEFIQYQADRPDDLDRELNGQGAATIPIGSTSSETETASTVGSEETVIQPPSTFTQGAAGRSGKAVQKTAMQCCLEYVQQFLSRLINLYIIHSDSFPQALAADHQGDFSRIQRETSKWDRDSQGDAKERNIHTPKTSKEYLSAFLAACQLFLECSSFPVYIAEGNHTSESHSEKPDTDCEHAHPPQWLRTLMSACSQARDFRVQSAAVSLVMDLVGLTQSVAMVTGENINSMEPAQPLSPNQGRVAVVIRPPLTQGNLKYIAEKTEFFKHVALTLWDQLGDGTPQHHQKSVELFYQLHNLVPSSSICEDVVSQQLTHKDKKIRMEAHAKFAVLWHLTRDLHINKSSFARSFDRSLFIMLDSLTSLDGSTSSVGQAWLNQVLQRHDIARVLEPLLLLLLHPKTQRVSVQRVQAERYWSKTSCYPGEENDKHFMQNFTCNNVSQVHLIASKGNGEKPLTMDEMENFSLTVNPLSDRLSLLSTSSETIPMVVSDFDLPDQQMEILQSSDSGCSQSSAGDNFSYEVDPENANAHEDSHMAKASSPDDDVQQVVFDLICKVVSGLEAESESVTSELEIESLQTKSSDLDPGKEATKIEDQAPQHSQHVLLSDDSPRFLSVSTEEGCECLANGISRNSSSPCISGTAQTLNDSSVPSETKSRQRSHSSIQFSFKEKLSEKVSEKETIVKESGKQPGAKPKVKLARKKDEDKKKAASEKLKQANVFFSEGLDLENWYSCGEGEISEIESDMGSPGSRKSPNFNIHPLYQHVLLYLQLYDSSRTLYAFSAIKSILKTNPIAFVNAISTTSVNNAYTPQLSLLQNLLARHRISVMGKDFYSHIPVDSNHNFRSSMYIEILISLCLYYMRSHYPTHVKVTTQDLIGNRNMQMMSIEILTLLFTELAKVIESSAKGFPSFISDMLSKCKVQKVILHCLLSSIFSVQKWHSEKTAGKSMVAVEEGFSEDSLINFSEDELDNGSTLQSQLLRVLQRLIVLEHHVMTIPEENEAGFDFVVSDLEHISPHQPMTSLQYLHAQPITCQGMFLCAVIRALHQHCACKMHPQWIGLITSTLPYMGKVLQRVVVSVTLQLCRNLDNLIQQYKYETGLSDSRPLWVASIIPPDMILTLLEGITAIIHYCLLDPTTQYHQLLVNVDQKHLVEARSGILSILHMIMSSVTLLWSILHQADASEKMAVAASASVTTINLGATKVIPAASEEQLLLVELVRSISVMRAETVIQTVKEVLKQPPAIAKDKVRKLCFCRKFSFRTGADRIPVPNIVDSWTSLLVLLKDSIQLSLPAPGQFLILGVLNEFIMKNPSLENKKDQRDLQDVTHKIVDAIGAIAGSSLEQTTWLRRNLEVKPSPKIMVDGTNLESDVEDMLSPAMETSNITPSVYSVHALTLLSEVLAHLLDMVFYSDEKERVIPLLVNIMHYVVPYLRNHSAHNAPSYRACVQLLSSLSGYQYTRRAWKKEAFDLFMDPSFFQMDASCVSHWRAIMDNLMTHDKTTFRDLMTRVAVAQSSSLNLFANRDVELEQRAMLLKRLAFAVLSSESDQYQKYLPDIQERLVESLRLPQVQVFLLMEQELTADEDISRTSGPSAAGLETTYTGGNGFSTSYNSQRWLNLYLSACKFLDLALALPSENLPQFQMYRWAFIPEASDDSGLEVRRQGIHQREFKPYVVRLAKLLRKRAKDEEDFKILEGLEMAKHQKNPEEDCSGRTLGWEPGHLLLTLCTMRNMEQLLPFFNVLSQVFNSKVTSRCGGHSGSPVLYPNSFPNKDMKLENHKAFSSKARQKIEEMIEKDFLEGVIKT</sequence>
<reference key="1">
    <citation type="journal article" date="2005" name="Science">
        <title>The transcriptional landscape of the mammalian genome.</title>
        <authorList>
            <person name="Carninci P."/>
            <person name="Kasukawa T."/>
            <person name="Katayama S."/>
            <person name="Gough J."/>
            <person name="Frith M.C."/>
            <person name="Maeda N."/>
            <person name="Oyama R."/>
            <person name="Ravasi T."/>
            <person name="Lenhard B."/>
            <person name="Wells C."/>
            <person name="Kodzius R."/>
            <person name="Shimokawa K."/>
            <person name="Bajic V.B."/>
            <person name="Brenner S.E."/>
            <person name="Batalov S."/>
            <person name="Forrest A.R."/>
            <person name="Zavolan M."/>
            <person name="Davis M.J."/>
            <person name="Wilming L.G."/>
            <person name="Aidinis V."/>
            <person name="Allen J.E."/>
            <person name="Ambesi-Impiombato A."/>
            <person name="Apweiler R."/>
            <person name="Aturaliya R.N."/>
            <person name="Bailey T.L."/>
            <person name="Bansal M."/>
            <person name="Baxter L."/>
            <person name="Beisel K.W."/>
            <person name="Bersano T."/>
            <person name="Bono H."/>
            <person name="Chalk A.M."/>
            <person name="Chiu K.P."/>
            <person name="Choudhary V."/>
            <person name="Christoffels A."/>
            <person name="Clutterbuck D.R."/>
            <person name="Crowe M.L."/>
            <person name="Dalla E."/>
            <person name="Dalrymple B.P."/>
            <person name="de Bono B."/>
            <person name="Della Gatta G."/>
            <person name="di Bernardo D."/>
            <person name="Down T."/>
            <person name="Engstrom P."/>
            <person name="Fagiolini M."/>
            <person name="Faulkner G."/>
            <person name="Fletcher C.F."/>
            <person name="Fukushima T."/>
            <person name="Furuno M."/>
            <person name="Futaki S."/>
            <person name="Gariboldi M."/>
            <person name="Georgii-Hemming P."/>
            <person name="Gingeras T.R."/>
            <person name="Gojobori T."/>
            <person name="Green R.E."/>
            <person name="Gustincich S."/>
            <person name="Harbers M."/>
            <person name="Hayashi Y."/>
            <person name="Hensch T.K."/>
            <person name="Hirokawa N."/>
            <person name="Hill D."/>
            <person name="Huminiecki L."/>
            <person name="Iacono M."/>
            <person name="Ikeo K."/>
            <person name="Iwama A."/>
            <person name="Ishikawa T."/>
            <person name="Jakt M."/>
            <person name="Kanapin A."/>
            <person name="Katoh M."/>
            <person name="Kawasawa Y."/>
            <person name="Kelso J."/>
            <person name="Kitamura H."/>
            <person name="Kitano H."/>
            <person name="Kollias G."/>
            <person name="Krishnan S.P."/>
            <person name="Kruger A."/>
            <person name="Kummerfeld S.K."/>
            <person name="Kurochkin I.V."/>
            <person name="Lareau L.F."/>
            <person name="Lazarevic D."/>
            <person name="Lipovich L."/>
            <person name="Liu J."/>
            <person name="Liuni S."/>
            <person name="McWilliam S."/>
            <person name="Madan Babu M."/>
            <person name="Madera M."/>
            <person name="Marchionni L."/>
            <person name="Matsuda H."/>
            <person name="Matsuzawa S."/>
            <person name="Miki H."/>
            <person name="Mignone F."/>
            <person name="Miyake S."/>
            <person name="Morris K."/>
            <person name="Mottagui-Tabar S."/>
            <person name="Mulder N."/>
            <person name="Nakano N."/>
            <person name="Nakauchi H."/>
            <person name="Ng P."/>
            <person name="Nilsson R."/>
            <person name="Nishiguchi S."/>
            <person name="Nishikawa S."/>
            <person name="Nori F."/>
            <person name="Ohara O."/>
            <person name="Okazaki Y."/>
            <person name="Orlando V."/>
            <person name="Pang K.C."/>
            <person name="Pavan W.J."/>
            <person name="Pavesi G."/>
            <person name="Pesole G."/>
            <person name="Petrovsky N."/>
            <person name="Piazza S."/>
            <person name="Reed J."/>
            <person name="Reid J.F."/>
            <person name="Ring B.Z."/>
            <person name="Ringwald M."/>
            <person name="Rost B."/>
            <person name="Ruan Y."/>
            <person name="Salzberg S.L."/>
            <person name="Sandelin A."/>
            <person name="Schneider C."/>
            <person name="Schoenbach C."/>
            <person name="Sekiguchi K."/>
            <person name="Semple C.A."/>
            <person name="Seno S."/>
            <person name="Sessa L."/>
            <person name="Sheng Y."/>
            <person name="Shibata Y."/>
            <person name="Shimada H."/>
            <person name="Shimada K."/>
            <person name="Silva D."/>
            <person name="Sinclair B."/>
            <person name="Sperling S."/>
            <person name="Stupka E."/>
            <person name="Sugiura K."/>
            <person name="Sultana R."/>
            <person name="Takenaka Y."/>
            <person name="Taki K."/>
            <person name="Tammoja K."/>
            <person name="Tan S.L."/>
            <person name="Tang S."/>
            <person name="Taylor M.S."/>
            <person name="Tegner J."/>
            <person name="Teichmann S.A."/>
            <person name="Ueda H.R."/>
            <person name="van Nimwegen E."/>
            <person name="Verardo R."/>
            <person name="Wei C.L."/>
            <person name="Yagi K."/>
            <person name="Yamanishi H."/>
            <person name="Zabarovsky E."/>
            <person name="Zhu S."/>
            <person name="Zimmer A."/>
            <person name="Hide W."/>
            <person name="Bult C."/>
            <person name="Grimmond S.M."/>
            <person name="Teasdale R.D."/>
            <person name="Liu E.T."/>
            <person name="Brusic V."/>
            <person name="Quackenbush J."/>
            <person name="Wahlestedt C."/>
            <person name="Mattick J.S."/>
            <person name="Hume D.A."/>
            <person name="Kai C."/>
            <person name="Sasaki D."/>
            <person name="Tomaru Y."/>
            <person name="Fukuda S."/>
            <person name="Kanamori-Katayama M."/>
            <person name="Suzuki M."/>
            <person name="Aoki J."/>
            <person name="Arakawa T."/>
            <person name="Iida J."/>
            <person name="Imamura K."/>
            <person name="Itoh M."/>
            <person name="Kato T."/>
            <person name="Kawaji H."/>
            <person name="Kawagashira N."/>
            <person name="Kawashima T."/>
            <person name="Kojima M."/>
            <person name="Kondo S."/>
            <person name="Konno H."/>
            <person name="Nakano K."/>
            <person name="Ninomiya N."/>
            <person name="Nishio T."/>
            <person name="Okada M."/>
            <person name="Plessy C."/>
            <person name="Shibata K."/>
            <person name="Shiraki T."/>
            <person name="Suzuki S."/>
            <person name="Tagami M."/>
            <person name="Waki K."/>
            <person name="Watahiki A."/>
            <person name="Okamura-Oho Y."/>
            <person name="Suzuki H."/>
            <person name="Kawai J."/>
            <person name="Hayashizaki Y."/>
        </authorList>
    </citation>
    <scope>NUCLEOTIDE SEQUENCE [LARGE SCALE MRNA] (ISOFORMS 2 AND 4)</scope>
    <scope>NUCLEOTIDE SEQUENCE [LARGE SCALE MRNA] OF 1-1252 (ISOFORM 6)</scope>
    <scope>NUCLEOTIDE SEQUENCE [LARGE SCALE MRNA] OF 1-726 (ISOFORM 5)</scope>
    <source>
        <strain>C57BL/6J</strain>
        <tissue>Corpora quadrigemina</tissue>
        <tissue>Embryo</tissue>
        <tissue>Lung</tissue>
        <tissue>Ovary</tissue>
        <tissue>Wolffian duct</tissue>
    </source>
</reference>
<reference key="2">
    <citation type="journal article" date="2009" name="PLoS Biol.">
        <title>Lineage-specific biology revealed by a finished genome assembly of the mouse.</title>
        <authorList>
            <person name="Church D.M."/>
            <person name="Goodstadt L."/>
            <person name="Hillier L.W."/>
            <person name="Zody M.C."/>
            <person name="Goldstein S."/>
            <person name="She X."/>
            <person name="Bult C.J."/>
            <person name="Agarwala R."/>
            <person name="Cherry J.L."/>
            <person name="DiCuccio M."/>
            <person name="Hlavina W."/>
            <person name="Kapustin Y."/>
            <person name="Meric P."/>
            <person name="Maglott D."/>
            <person name="Birtle Z."/>
            <person name="Marques A.C."/>
            <person name="Graves T."/>
            <person name="Zhou S."/>
            <person name="Teague B."/>
            <person name="Potamousis K."/>
            <person name="Churas C."/>
            <person name="Place M."/>
            <person name="Herschleb J."/>
            <person name="Runnheim R."/>
            <person name="Forrest D."/>
            <person name="Amos-Landgraf J."/>
            <person name="Schwartz D.C."/>
            <person name="Cheng Z."/>
            <person name="Lindblad-Toh K."/>
            <person name="Eichler E.E."/>
            <person name="Ponting C.P."/>
        </authorList>
    </citation>
    <scope>NUCLEOTIDE SEQUENCE [LARGE SCALE GENOMIC DNA]</scope>
    <source>
        <strain>C57BL/6J</strain>
    </source>
</reference>
<reference key="3">
    <citation type="journal article" date="2004" name="Genome Res.">
        <title>The status, quality, and expansion of the NIH full-length cDNA project: the Mammalian Gene Collection (MGC).</title>
        <authorList>
            <consortium name="The MGC Project Team"/>
        </authorList>
    </citation>
    <scope>NUCLEOTIDE SEQUENCE [LARGE SCALE MRNA] (ISOFORM 3)</scope>
    <source>
        <tissue>Eye</tissue>
    </source>
</reference>
<reference key="4">
    <citation type="journal article" date="2010" name="Cell">
        <title>A tissue-specific atlas of mouse protein phosphorylation and expression.</title>
        <authorList>
            <person name="Huttlin E.L."/>
            <person name="Jedrychowski M.P."/>
            <person name="Elias J.E."/>
            <person name="Goswami T."/>
            <person name="Rad R."/>
            <person name="Beausoleil S.A."/>
            <person name="Villen J."/>
            <person name="Haas W."/>
            <person name="Sowa M.E."/>
            <person name="Gygi S.P."/>
        </authorList>
    </citation>
    <scope>PHOSPHORYLATION [LARGE SCALE ANALYSIS] AT SER-1261</scope>
    <scope>IDENTIFICATION BY MASS SPECTROMETRY [LARGE SCALE ANALYSIS]</scope>
    <source>
        <tissue>Brain</tissue>
        <tissue>Brown adipose tissue</tissue>
        <tissue>Heart</tissue>
        <tissue>Kidney</tissue>
        <tissue>Lung</tissue>
        <tissue>Spleen</tissue>
        <tissue>Testis</tissue>
    </source>
</reference>
<keyword id="KW-0025">Alternative splicing</keyword>
<keyword id="KW-0333">Golgi apparatus</keyword>
<keyword id="KW-0472">Membrane</keyword>
<keyword id="KW-0597">Phosphoprotein</keyword>
<keyword id="KW-0653">Protein transport</keyword>
<keyword id="KW-1185">Reference proteome</keyword>
<keyword id="KW-0813">Transport</keyword>
<feature type="chain" id="PRO_0000297948" description="Protein DOP1A">
    <location>
        <begin position="1"/>
        <end position="2399"/>
    </location>
</feature>
<feature type="region of interest" description="Disordered" evidence="2">
    <location>
        <begin position="556"/>
        <end position="598"/>
    </location>
</feature>
<feature type="region of interest" description="Disordered" evidence="2">
    <location>
        <begin position="619"/>
        <end position="660"/>
    </location>
</feature>
<feature type="region of interest" description="Disordered" evidence="2">
    <location>
        <begin position="1105"/>
        <end position="1124"/>
    </location>
</feature>
<feature type="region of interest" description="Disordered" evidence="2">
    <location>
        <begin position="1166"/>
        <end position="1188"/>
    </location>
</feature>
<feature type="region of interest" description="Disordered" evidence="2">
    <location>
        <begin position="1234"/>
        <end position="1263"/>
    </location>
</feature>
<feature type="region of interest" description="Disordered" evidence="2">
    <location>
        <begin position="1279"/>
        <end position="1308"/>
    </location>
</feature>
<feature type="compositionally biased region" description="Low complexity" evidence="2">
    <location>
        <begin position="629"/>
        <end position="647"/>
    </location>
</feature>
<feature type="compositionally biased region" description="Low complexity" evidence="2">
    <location>
        <begin position="1105"/>
        <end position="1116"/>
    </location>
</feature>
<feature type="compositionally biased region" description="Polar residues" evidence="2">
    <location>
        <begin position="1166"/>
        <end position="1180"/>
    </location>
</feature>
<feature type="compositionally biased region" description="Polar residues" evidence="2">
    <location>
        <begin position="1234"/>
        <end position="1252"/>
    </location>
</feature>
<feature type="modified residue" description="Phosphoserine" evidence="7">
    <location>
        <position position="1261"/>
    </location>
</feature>
<feature type="splice variant" id="VSP_027418" description="In isoform 3." evidence="3">
    <location>
        <begin position="1"/>
        <end position="1852"/>
    </location>
</feature>
<feature type="splice variant" id="VSP_027419" description="In isoform 6." evidence="4">
    <location>
        <begin position="294"/>
        <end position="302"/>
    </location>
</feature>
<feature type="splice variant" id="VSP_027420" description="In isoform 4." evidence="4">
    <original>AMVGILQVNGFGEESTLMQDLKPFRILISLLDKP</original>
    <variation>VTAVFIILCLSYIEKA</variation>
    <location>
        <begin position="331"/>
        <end position="364"/>
    </location>
</feature>
<feature type="splice variant" id="VSP_027421" description="In isoform 4." evidence="4">
    <location>
        <begin position="365"/>
        <end position="2399"/>
    </location>
</feature>
<feature type="splice variant" id="VSP_027422" description="In isoform 5." evidence="4">
    <location>
        <begin position="446"/>
        <end position="453"/>
    </location>
</feature>
<feature type="splice variant" id="VSP_027423" description="In isoform 6." evidence="4">
    <original>L</original>
    <variation>LPTRSMRVLCQ</variation>
    <location>
        <position position="492"/>
    </location>
</feature>
<feature type="splice variant" id="VSP_027424" description="In isoform 2." evidence="4">
    <original>QVSSVSMENPAEVF</original>
    <variation>VISVGVHFFGVEFH</variation>
    <location>
        <begin position="571"/>
        <end position="584"/>
    </location>
</feature>
<feature type="splice variant" id="VSP_027425" description="In isoform 6." evidence="4">
    <location>
        <position position="571"/>
    </location>
</feature>
<feature type="splice variant" id="VSP_027426" description="In isoform 2." evidence="4">
    <location>
        <begin position="585"/>
        <end position="2399"/>
    </location>
</feature>
<feature type="splice variant" id="VSP_027427" description="In isoform 3." evidence="3">
    <original>RKFSFRTGAD</original>
    <variation>MLQFFYAYIQ</variation>
    <location>
        <begin position="1853"/>
        <end position="1862"/>
    </location>
</feature>
<feature type="splice variant" id="VSP_027428" description="In isoform 3." evidence="3">
    <original>Q</original>
    <variation>QVPTLHSQVFLFFRVLLLRMSPQHLTSLWPTMITEL</variation>
    <location>
        <position position="2164"/>
    </location>
</feature>
<feature type="splice variant" id="VSP_027429" description="In isoform 3." evidence="3">
    <location>
        <begin position="2282"/>
        <end position="2298"/>
    </location>
</feature>
<accession>Q8BL99</accession>
<accession>Q80XM5</accession>
<accession>Q8BIX5</accession>
<accession>Q8BIY4</accession>
<accession>Q8BLK8</accession>
<comment type="function">
    <text evidence="1">May be involved in protein traffic between late Golgi and early endosomes.</text>
</comment>
<comment type="subcellular location">
    <subcellularLocation>
        <location evidence="1">Golgi apparatus membrane</location>
        <topology evidence="1">Peripheral membrane protein</topology>
    </subcellularLocation>
</comment>
<comment type="alternative products">
    <event type="alternative splicing"/>
    <isoform>
        <id>Q8BL99-1</id>
        <name>1</name>
        <sequence type="displayed"/>
    </isoform>
    <isoform>
        <id>Q8BL99-2</id>
        <name>2</name>
        <sequence type="described" ref="VSP_027424 VSP_027426"/>
    </isoform>
    <isoform>
        <id>Q8BL99-3</id>
        <name>3</name>
        <sequence type="described" ref="VSP_027418 VSP_027427 VSP_027428 VSP_027429"/>
    </isoform>
    <isoform>
        <id>Q8BL99-4</id>
        <name>4</name>
        <sequence type="described" ref="VSP_027420 VSP_027421"/>
    </isoform>
    <isoform>
        <id>Q8BL99-5</id>
        <name>5</name>
        <sequence type="described" ref="VSP_027422"/>
    </isoform>
    <isoform>
        <id>Q8BL99-6</id>
        <name>6</name>
        <sequence type="described" ref="VSP_027419 VSP_027423 VSP_027425"/>
    </isoform>
</comment>
<comment type="similarity">
    <text evidence="5">Belongs to the DOP1 family.</text>
</comment>
<proteinExistence type="evidence at protein level"/>
<evidence type="ECO:0000250" key="1">
    <source>
        <dbReference type="UniProtKB" id="Q03921"/>
    </source>
</evidence>
<evidence type="ECO:0000256" key="2">
    <source>
        <dbReference type="SAM" id="MobiDB-lite"/>
    </source>
</evidence>
<evidence type="ECO:0000303" key="3">
    <source>
    </source>
</evidence>
<evidence type="ECO:0000303" key="4">
    <source>
    </source>
</evidence>
<evidence type="ECO:0000305" key="5"/>
<evidence type="ECO:0000312" key="6">
    <source>
        <dbReference type="MGI" id="MGI:1289294"/>
    </source>
</evidence>
<evidence type="ECO:0007744" key="7">
    <source>
    </source>
</evidence>
<gene>
    <name type="primary">Dop1a</name>
    <name type="synonym">D9Ertd809e</name>
    <name evidence="6" type="synonym">Dopey1</name>
</gene>